<name>AROD_LISMC</name>
<gene>
    <name evidence="1" type="primary">aroD</name>
    <name type="ordered locus">Lm4b_00514</name>
</gene>
<comment type="function">
    <text evidence="1">Involved in the third step of the chorismate pathway, which leads to the biosynthesis of aromatic amino acids. Catalyzes the cis-dehydration of 3-dehydroquinate (DHQ) and introduces the first double bond of the aromatic ring to yield 3-dehydroshikimate.</text>
</comment>
<comment type="catalytic activity">
    <reaction evidence="1">
        <text>3-dehydroquinate = 3-dehydroshikimate + H2O</text>
        <dbReference type="Rhea" id="RHEA:21096"/>
        <dbReference type="ChEBI" id="CHEBI:15377"/>
        <dbReference type="ChEBI" id="CHEBI:16630"/>
        <dbReference type="ChEBI" id="CHEBI:32364"/>
        <dbReference type="EC" id="4.2.1.10"/>
    </reaction>
</comment>
<comment type="pathway">
    <text evidence="1">Metabolic intermediate biosynthesis; chorismate biosynthesis; chorismate from D-erythrose 4-phosphate and phosphoenolpyruvate: step 3/7.</text>
</comment>
<comment type="subunit">
    <text evidence="1">Homodimer.</text>
</comment>
<comment type="similarity">
    <text evidence="1">Belongs to the type-I 3-dehydroquinase family.</text>
</comment>
<organism>
    <name type="scientific">Listeria monocytogenes serotype 4b (strain CLIP80459)</name>
    <dbReference type="NCBI Taxonomy" id="568819"/>
    <lineage>
        <taxon>Bacteria</taxon>
        <taxon>Bacillati</taxon>
        <taxon>Bacillota</taxon>
        <taxon>Bacilli</taxon>
        <taxon>Bacillales</taxon>
        <taxon>Listeriaceae</taxon>
        <taxon>Listeria</taxon>
    </lineage>
</organism>
<keyword id="KW-0028">Amino-acid biosynthesis</keyword>
<keyword id="KW-0057">Aromatic amino acid biosynthesis</keyword>
<keyword id="KW-0456">Lyase</keyword>
<keyword id="KW-0704">Schiff base</keyword>
<dbReference type="EC" id="4.2.1.10" evidence="1"/>
<dbReference type="EMBL" id="FM242711">
    <property type="protein sequence ID" value="CAS04282.1"/>
    <property type="molecule type" value="Genomic_DNA"/>
</dbReference>
<dbReference type="RefSeq" id="WP_012681113.1">
    <property type="nucleotide sequence ID" value="NC_012488.1"/>
</dbReference>
<dbReference type="SMR" id="C1L005"/>
<dbReference type="KEGG" id="lmc:Lm4b_00514"/>
<dbReference type="HOGENOM" id="CLU_064444_0_0_9"/>
<dbReference type="UniPathway" id="UPA00053">
    <property type="reaction ID" value="UER00086"/>
</dbReference>
<dbReference type="GO" id="GO:0003855">
    <property type="term" value="F:3-dehydroquinate dehydratase activity"/>
    <property type="evidence" value="ECO:0007669"/>
    <property type="project" value="UniProtKB-UniRule"/>
</dbReference>
<dbReference type="GO" id="GO:0046279">
    <property type="term" value="P:3,4-dihydroxybenzoate biosynthetic process"/>
    <property type="evidence" value="ECO:0007669"/>
    <property type="project" value="TreeGrafter"/>
</dbReference>
<dbReference type="GO" id="GO:0008652">
    <property type="term" value="P:amino acid biosynthetic process"/>
    <property type="evidence" value="ECO:0007669"/>
    <property type="project" value="UniProtKB-KW"/>
</dbReference>
<dbReference type="GO" id="GO:0009073">
    <property type="term" value="P:aromatic amino acid family biosynthetic process"/>
    <property type="evidence" value="ECO:0007669"/>
    <property type="project" value="UniProtKB-KW"/>
</dbReference>
<dbReference type="GO" id="GO:0009423">
    <property type="term" value="P:chorismate biosynthetic process"/>
    <property type="evidence" value="ECO:0007669"/>
    <property type="project" value="UniProtKB-UniRule"/>
</dbReference>
<dbReference type="CDD" id="cd00502">
    <property type="entry name" value="DHQase_I"/>
    <property type="match status" value="1"/>
</dbReference>
<dbReference type="FunFam" id="3.20.20.70:FF:000047">
    <property type="entry name" value="3-dehydroquinate dehydratase"/>
    <property type="match status" value="1"/>
</dbReference>
<dbReference type="Gene3D" id="3.20.20.70">
    <property type="entry name" value="Aldolase class I"/>
    <property type="match status" value="1"/>
</dbReference>
<dbReference type="HAMAP" id="MF_00214">
    <property type="entry name" value="AroD"/>
    <property type="match status" value="1"/>
</dbReference>
<dbReference type="InterPro" id="IPR018508">
    <property type="entry name" value="3-dehydroquinate_DH_AS"/>
</dbReference>
<dbReference type="InterPro" id="IPR013785">
    <property type="entry name" value="Aldolase_TIM"/>
</dbReference>
<dbReference type="InterPro" id="IPR001381">
    <property type="entry name" value="DHquinase_I"/>
</dbReference>
<dbReference type="InterPro" id="IPR050146">
    <property type="entry name" value="Type-I_3-dehydroquinase"/>
</dbReference>
<dbReference type="NCBIfam" id="TIGR01093">
    <property type="entry name" value="aroD"/>
    <property type="match status" value="1"/>
</dbReference>
<dbReference type="PANTHER" id="PTHR43699">
    <property type="entry name" value="3-DEHYDROQUINATE DEHYDRATASE"/>
    <property type="match status" value="1"/>
</dbReference>
<dbReference type="PANTHER" id="PTHR43699:SF1">
    <property type="entry name" value="3-DEHYDROQUINATE DEHYDRATASE"/>
    <property type="match status" value="1"/>
</dbReference>
<dbReference type="Pfam" id="PF01487">
    <property type="entry name" value="DHquinase_I"/>
    <property type="match status" value="1"/>
</dbReference>
<dbReference type="SUPFAM" id="SSF51569">
    <property type="entry name" value="Aldolase"/>
    <property type="match status" value="1"/>
</dbReference>
<dbReference type="PROSITE" id="PS01028">
    <property type="entry name" value="DEHYDROQUINASE_I"/>
    <property type="match status" value="1"/>
</dbReference>
<evidence type="ECO:0000255" key="1">
    <source>
        <dbReference type="HAMAP-Rule" id="MF_00214"/>
    </source>
</evidence>
<proteinExistence type="inferred from homology"/>
<reference key="1">
    <citation type="journal article" date="2012" name="BMC Genomics">
        <title>Comparative genomics and transcriptomics of lineages I, II, and III strains of Listeria monocytogenes.</title>
        <authorList>
            <person name="Hain T."/>
            <person name="Ghai R."/>
            <person name="Billion A."/>
            <person name="Kuenne C.T."/>
            <person name="Steinweg C."/>
            <person name="Izar B."/>
            <person name="Mohamed W."/>
            <person name="Mraheil M."/>
            <person name="Domann E."/>
            <person name="Schaffrath S."/>
            <person name="Karst U."/>
            <person name="Goesmann A."/>
            <person name="Oehm S."/>
            <person name="Puhler A."/>
            <person name="Merkl R."/>
            <person name="Vorwerk S."/>
            <person name="Glaser P."/>
            <person name="Garrido P."/>
            <person name="Rusniok C."/>
            <person name="Buchrieser C."/>
            <person name="Goebel W."/>
            <person name="Chakraborty T."/>
        </authorList>
    </citation>
    <scope>NUCLEOTIDE SEQUENCE [LARGE SCALE GENOMIC DNA]</scope>
    <source>
        <strain>CLIP80459</strain>
    </source>
</reference>
<accession>C1L005</accession>
<feature type="chain" id="PRO_1000204212" description="3-dehydroquinate dehydratase">
    <location>
        <begin position="1"/>
        <end position="252"/>
    </location>
</feature>
<feature type="active site" description="Proton donor/acceptor" evidence="1">
    <location>
        <position position="143"/>
    </location>
</feature>
<feature type="active site" description="Schiff-base intermediate with substrate" evidence="1">
    <location>
        <position position="170"/>
    </location>
</feature>
<feature type="binding site" evidence="1">
    <location>
        <begin position="46"/>
        <end position="48"/>
    </location>
    <ligand>
        <name>3-dehydroquinate</name>
        <dbReference type="ChEBI" id="CHEBI:32364"/>
    </ligand>
</feature>
<feature type="binding site" evidence="1">
    <location>
        <position position="82"/>
    </location>
    <ligand>
        <name>3-dehydroquinate</name>
        <dbReference type="ChEBI" id="CHEBI:32364"/>
    </ligand>
</feature>
<feature type="binding site" evidence="1">
    <location>
        <position position="212"/>
    </location>
    <ligand>
        <name>3-dehydroquinate</name>
        <dbReference type="ChEBI" id="CHEBI:32364"/>
    </ligand>
</feature>
<feature type="binding site" evidence="1">
    <location>
        <position position="231"/>
    </location>
    <ligand>
        <name>3-dehydroquinate</name>
        <dbReference type="ChEBI" id="CHEBI:32364"/>
    </ligand>
</feature>
<feature type="binding site" evidence="1">
    <location>
        <position position="235"/>
    </location>
    <ligand>
        <name>3-dehydroquinate</name>
        <dbReference type="ChEBI" id="CHEBI:32364"/>
    </ligand>
</feature>
<sequence length="252" mass="27504">MNKVVVKNVTFGEGAPKICVPMVGKTVAALKEEAEMLQTIDLDVVEWRVDFFEDVKDLAKVEAALDEIRTILPETPILFTFRSAKEGGELAVSDEFYFELNETLAGTGKIDLVDVELFNEEADVLRLIETAHKNNVKVVMSNHDFDKTPAKEEIVSRLTRMEALGADLPKIAVMPKSAGDVLTLLDATNTVSEKANQPIITMSMAGTGVISRLAGEVFGSAMTFGAAKKASAPGQIDVNELRHVLDLLHKQF</sequence>
<protein>
    <recommendedName>
        <fullName evidence="1">3-dehydroquinate dehydratase</fullName>
        <shortName evidence="1">3-dehydroquinase</shortName>
        <ecNumber evidence="1">4.2.1.10</ecNumber>
    </recommendedName>
    <alternativeName>
        <fullName evidence="1">Type I DHQase</fullName>
    </alternativeName>
    <alternativeName>
        <fullName evidence="1">Type I dehydroquinase</fullName>
        <shortName evidence="1">DHQ1</shortName>
    </alternativeName>
</protein>